<dbReference type="EMBL" id="U39205">
    <property type="protein sequence ID" value="AAB68310.1"/>
    <property type="molecule type" value="Genomic_DNA"/>
</dbReference>
<dbReference type="EMBL" id="AY558038">
    <property type="protein sequence ID" value="AAS56364.1"/>
    <property type="molecule type" value="Genomic_DNA"/>
</dbReference>
<dbReference type="EMBL" id="BK006949">
    <property type="protein sequence ID" value="DAA11375.1"/>
    <property type="molecule type" value="Genomic_DNA"/>
</dbReference>
<dbReference type="PIR" id="S60935">
    <property type="entry name" value="S60935"/>
</dbReference>
<dbReference type="RefSeq" id="NP_015270.1">
    <property type="nucleotide sequence ID" value="NM_001183869.1"/>
</dbReference>
<dbReference type="SMR" id="Q02796"/>
<dbReference type="BioGRID" id="36125">
    <property type="interactions" value="822"/>
</dbReference>
<dbReference type="DIP" id="DIP-6470N"/>
<dbReference type="FunCoup" id="Q02796">
    <property type="interactions" value="202"/>
</dbReference>
<dbReference type="IntAct" id="Q02796">
    <property type="interactions" value="87"/>
</dbReference>
<dbReference type="MINT" id="Q02796"/>
<dbReference type="STRING" id="4932.YPL055C"/>
<dbReference type="GlyGen" id="Q02796">
    <property type="glycosylation" value="2 sites, 1 O-linked glycan (2 sites)"/>
</dbReference>
<dbReference type="iPTMnet" id="Q02796"/>
<dbReference type="PaxDb" id="4932-YPL055C"/>
<dbReference type="PeptideAtlas" id="Q02796"/>
<dbReference type="EnsemblFungi" id="YPL055C_mRNA">
    <property type="protein sequence ID" value="YPL055C"/>
    <property type="gene ID" value="YPL055C"/>
</dbReference>
<dbReference type="GeneID" id="856052"/>
<dbReference type="KEGG" id="sce:YPL055C"/>
<dbReference type="AGR" id="SGD:S000005976"/>
<dbReference type="SGD" id="S000005976">
    <property type="gene designation" value="LGE1"/>
</dbReference>
<dbReference type="VEuPathDB" id="FungiDB:YPL055C"/>
<dbReference type="eggNOG" id="ENOG502SA4A">
    <property type="taxonomic scope" value="Eukaryota"/>
</dbReference>
<dbReference type="HOGENOM" id="CLU_826809_0_0_1"/>
<dbReference type="InParanoid" id="Q02796"/>
<dbReference type="OMA" id="YSANSRH"/>
<dbReference type="OrthoDB" id="4070541at2759"/>
<dbReference type="BioCyc" id="YEAST:G3O-33967-MONOMER"/>
<dbReference type="BioGRID-ORCS" id="856052">
    <property type="hits" value="4 hits in 10 CRISPR screens"/>
</dbReference>
<dbReference type="CD-CODE" id="4081D115">
    <property type="entry name" value="Synthetic Condensate 000341"/>
</dbReference>
<dbReference type="CD-CODE" id="8339491E">
    <property type="entry name" value="Synthetic Condensate 000329"/>
</dbReference>
<dbReference type="CD-CODE" id="D12D7489">
    <property type="entry name" value="Synthetic Condensate 000333"/>
</dbReference>
<dbReference type="PRO" id="PR:Q02796"/>
<dbReference type="Proteomes" id="UP000002311">
    <property type="component" value="Chromosome XVI"/>
</dbReference>
<dbReference type="RNAct" id="Q02796">
    <property type="molecule type" value="protein"/>
</dbReference>
<dbReference type="GO" id="GO:0005634">
    <property type="term" value="C:nucleus"/>
    <property type="evidence" value="ECO:0000314"/>
    <property type="project" value="SGD"/>
</dbReference>
<dbReference type="GO" id="GO:0140693">
    <property type="term" value="F:molecular condensate scaffold activity"/>
    <property type="evidence" value="ECO:0000314"/>
    <property type="project" value="SGD"/>
</dbReference>
<dbReference type="GO" id="GO:0006325">
    <property type="term" value="P:chromatin organization"/>
    <property type="evidence" value="ECO:0007669"/>
    <property type="project" value="UniProtKB-KW"/>
</dbReference>
<dbReference type="GO" id="GO:0006279">
    <property type="term" value="P:premeiotic DNA replication"/>
    <property type="evidence" value="ECO:0000315"/>
    <property type="project" value="SGD"/>
</dbReference>
<dbReference type="GO" id="GO:0008361">
    <property type="term" value="P:regulation of cell size"/>
    <property type="evidence" value="ECO:0007001"/>
    <property type="project" value="SGD"/>
</dbReference>
<dbReference type="CDD" id="cd22897">
    <property type="entry name" value="Lge1"/>
    <property type="match status" value="1"/>
</dbReference>
<dbReference type="InterPro" id="IPR021581">
    <property type="entry name" value="Tscrpt_reg_Lge1"/>
</dbReference>
<dbReference type="Pfam" id="PF11488">
    <property type="entry name" value="Lge1"/>
    <property type="match status" value="1"/>
</dbReference>
<protein>
    <recommendedName>
        <fullName evidence="10">Transcriptional regulatory protein LGE1</fullName>
    </recommendedName>
    <alternativeName>
        <fullName evidence="9">Large cells protein 1</fullName>
    </alternativeName>
</protein>
<feature type="chain" id="PRO_0000076234" description="Transcriptional regulatory protein LGE1">
    <location>
        <begin position="1"/>
        <end position="332"/>
    </location>
</feature>
<feature type="region of interest" description="Disordered" evidence="2">
    <location>
        <begin position="1"/>
        <end position="240"/>
    </location>
</feature>
<feature type="coiled-coil region" evidence="1">
    <location>
        <begin position="284"/>
        <end position="328"/>
    </location>
</feature>
<feature type="compositionally biased region" description="Polar residues" evidence="2">
    <location>
        <begin position="1"/>
        <end position="17"/>
    </location>
</feature>
<feature type="compositionally biased region" description="Basic residues" evidence="2">
    <location>
        <begin position="21"/>
        <end position="30"/>
    </location>
</feature>
<feature type="compositionally biased region" description="Low complexity" evidence="2">
    <location>
        <begin position="39"/>
        <end position="49"/>
    </location>
</feature>
<feature type="compositionally biased region" description="Polar residues" evidence="2">
    <location>
        <begin position="81"/>
        <end position="122"/>
    </location>
</feature>
<feature type="compositionally biased region" description="Low complexity" evidence="2">
    <location>
        <begin position="148"/>
        <end position="170"/>
    </location>
</feature>
<feature type="compositionally biased region" description="Low complexity" evidence="2">
    <location>
        <begin position="185"/>
        <end position="199"/>
    </location>
</feature>
<feature type="modified residue" description="Omega-N-methylarginine" evidence="8">
    <location>
        <position position="30"/>
    </location>
</feature>
<feature type="modified residue" description="Omega-N-methylarginine" evidence="7">
    <location>
        <position position="39"/>
    </location>
</feature>
<feature type="sequence conflict" description="In Ref. 3; AAS56364." evidence="10" ref="3">
    <original>R</original>
    <variation>Q</variation>
    <location>
        <position position="28"/>
    </location>
</feature>
<reference key="1">
    <citation type="journal article" date="1997" name="Nature">
        <title>The nucleotide sequence of Saccharomyces cerevisiae chromosome XVI.</title>
        <authorList>
            <person name="Bussey H."/>
            <person name="Storms R.K."/>
            <person name="Ahmed A."/>
            <person name="Albermann K."/>
            <person name="Allen E."/>
            <person name="Ansorge W."/>
            <person name="Araujo R."/>
            <person name="Aparicio A."/>
            <person name="Barrell B.G."/>
            <person name="Badcock K."/>
            <person name="Benes V."/>
            <person name="Botstein D."/>
            <person name="Bowman S."/>
            <person name="Brueckner M."/>
            <person name="Carpenter J."/>
            <person name="Cherry J.M."/>
            <person name="Chung E."/>
            <person name="Churcher C.M."/>
            <person name="Coster F."/>
            <person name="Davis K."/>
            <person name="Davis R.W."/>
            <person name="Dietrich F.S."/>
            <person name="Delius H."/>
            <person name="DiPaolo T."/>
            <person name="Dubois E."/>
            <person name="Duesterhoeft A."/>
            <person name="Duncan M."/>
            <person name="Floeth M."/>
            <person name="Fortin N."/>
            <person name="Friesen J.D."/>
            <person name="Fritz C."/>
            <person name="Goffeau A."/>
            <person name="Hall J."/>
            <person name="Hebling U."/>
            <person name="Heumann K."/>
            <person name="Hilbert H."/>
            <person name="Hillier L.W."/>
            <person name="Hunicke-Smith S."/>
            <person name="Hyman R.W."/>
            <person name="Johnston M."/>
            <person name="Kalman S."/>
            <person name="Kleine K."/>
            <person name="Komp C."/>
            <person name="Kurdi O."/>
            <person name="Lashkari D."/>
            <person name="Lew H."/>
            <person name="Lin A."/>
            <person name="Lin D."/>
            <person name="Louis E.J."/>
            <person name="Marathe R."/>
            <person name="Messenguy F."/>
            <person name="Mewes H.-W."/>
            <person name="Mirtipati S."/>
            <person name="Moestl D."/>
            <person name="Mueller-Auer S."/>
            <person name="Namath A."/>
            <person name="Nentwich U."/>
            <person name="Oefner P."/>
            <person name="Pearson D."/>
            <person name="Petel F.X."/>
            <person name="Pohl T.M."/>
            <person name="Purnelle B."/>
            <person name="Rajandream M.A."/>
            <person name="Rechmann S."/>
            <person name="Rieger M."/>
            <person name="Riles L."/>
            <person name="Roberts D."/>
            <person name="Schaefer M."/>
            <person name="Scharfe M."/>
            <person name="Scherens B."/>
            <person name="Schramm S."/>
            <person name="Schroeder M."/>
            <person name="Sdicu A.-M."/>
            <person name="Tettelin H."/>
            <person name="Urrestarazu L.A."/>
            <person name="Ushinsky S."/>
            <person name="Vierendeels F."/>
            <person name="Vissers S."/>
            <person name="Voss H."/>
            <person name="Walsh S.V."/>
            <person name="Wambutt R."/>
            <person name="Wang Y."/>
            <person name="Wedler E."/>
            <person name="Wedler H."/>
            <person name="Winnett E."/>
            <person name="Zhong W.-W."/>
            <person name="Zollner A."/>
            <person name="Vo D.H."/>
            <person name="Hani J."/>
        </authorList>
    </citation>
    <scope>NUCLEOTIDE SEQUENCE [LARGE SCALE GENOMIC DNA]</scope>
    <source>
        <strain>ATCC 204508 / S288c</strain>
    </source>
</reference>
<reference key="2">
    <citation type="journal article" date="2014" name="G3 (Bethesda)">
        <title>The reference genome sequence of Saccharomyces cerevisiae: Then and now.</title>
        <authorList>
            <person name="Engel S.R."/>
            <person name="Dietrich F.S."/>
            <person name="Fisk D.G."/>
            <person name="Binkley G."/>
            <person name="Balakrishnan R."/>
            <person name="Costanzo M.C."/>
            <person name="Dwight S.S."/>
            <person name="Hitz B.C."/>
            <person name="Karra K."/>
            <person name="Nash R.S."/>
            <person name="Weng S."/>
            <person name="Wong E.D."/>
            <person name="Lloyd P."/>
            <person name="Skrzypek M.S."/>
            <person name="Miyasato S.R."/>
            <person name="Simison M."/>
            <person name="Cherry J.M."/>
        </authorList>
    </citation>
    <scope>GENOME REANNOTATION</scope>
    <source>
        <strain>ATCC 204508 / S288c</strain>
    </source>
</reference>
<reference key="3">
    <citation type="journal article" date="2007" name="Genome Res.">
        <title>Approaching a complete repository of sequence-verified protein-encoding clones for Saccharomyces cerevisiae.</title>
        <authorList>
            <person name="Hu Y."/>
            <person name="Rolfs A."/>
            <person name="Bhullar B."/>
            <person name="Murthy T.V.S."/>
            <person name="Zhu C."/>
            <person name="Berger M.F."/>
            <person name="Camargo A.A."/>
            <person name="Kelley F."/>
            <person name="McCarron S."/>
            <person name="Jepson D."/>
            <person name="Richardson A."/>
            <person name="Raphael J."/>
            <person name="Moreira D."/>
            <person name="Taycher E."/>
            <person name="Zuo D."/>
            <person name="Mohr S."/>
            <person name="Kane M.F."/>
            <person name="Williamson J."/>
            <person name="Simpson A.J.G."/>
            <person name="Bulyk M.L."/>
            <person name="Harlow E."/>
            <person name="Marsischky G."/>
            <person name="Kolodner R.D."/>
            <person name="LaBaer J."/>
        </authorList>
    </citation>
    <scope>NUCLEOTIDE SEQUENCE [GENOMIC DNA]</scope>
    <source>
        <strain>ATCC 204508 / S288c</strain>
    </source>
</reference>
<reference key="4">
    <citation type="journal article" date="2002" name="Science">
        <title>Systematic identification of pathways that couple cell growth and division in yeast.</title>
        <authorList>
            <person name="Jorgensen P."/>
            <person name="Nishikawa J.L."/>
            <person name="Breitkreutz B.-J."/>
            <person name="Tyers M."/>
        </authorList>
    </citation>
    <scope>IDENTIFICATION</scope>
</reference>
<reference key="5">
    <citation type="journal article" date="2003" name="Mol. Cell">
        <title>A conserved RING finger protein required for histone H2B monoubiquitination and cell size control.</title>
        <authorList>
            <person name="Hwang W.W."/>
            <person name="Venkatasubrahmanyam S."/>
            <person name="Ianculescu A.G."/>
            <person name="Tong A."/>
            <person name="Boone C."/>
            <person name="Madhani H.D."/>
        </authorList>
    </citation>
    <scope>FUNCTION</scope>
    <scope>INTERACTION WITH BRE1</scope>
</reference>
<reference key="6">
    <citation type="journal article" date="2003" name="Nature">
        <title>Global analysis of protein localization in budding yeast.</title>
        <authorList>
            <person name="Huh W.-K."/>
            <person name="Falvo J.V."/>
            <person name="Gerke L.C."/>
            <person name="Carroll A.S."/>
            <person name="Howson R.W."/>
            <person name="Weissman J.S."/>
            <person name="O'Shea E.K."/>
        </authorList>
    </citation>
    <scope>SUBCELLULAR LOCATION [LARGE SCALE ANALYSIS]</scope>
</reference>
<reference key="7">
    <citation type="journal article" date="2003" name="Nature">
        <title>Global analysis of protein expression in yeast.</title>
        <authorList>
            <person name="Ghaemmaghami S."/>
            <person name="Huh W.-K."/>
            <person name="Bower K."/>
            <person name="Howson R.W."/>
            <person name="Belle A."/>
            <person name="Dephoure N."/>
            <person name="O'Shea E.K."/>
            <person name="Weissman J.S."/>
        </authorList>
    </citation>
    <scope>LEVEL OF PROTEIN EXPRESSION [LARGE SCALE ANALYSIS]</scope>
</reference>
<reference key="8">
    <citation type="journal article" date="2005" name="J. Biol. Chem.">
        <title>Transcriptional regulation by Lge1p requires a function independent of its role in histone H2B ubiquitination.</title>
        <authorList>
            <person name="Zhang X."/>
            <person name="Kolaczkowska A."/>
            <person name="Devaux F."/>
            <person name="Panwar S.L."/>
            <person name="Hallstrom T.C."/>
            <person name="Jacq C."/>
            <person name="Moye-Rowley W.S."/>
        </authorList>
    </citation>
    <scope>FUNCTION</scope>
    <scope>INTERACTION WITH BRE1</scope>
</reference>
<reference key="9">
    <citation type="journal article" date="2008" name="Mol. Cell. Proteomics">
        <title>A multidimensional chromatography technology for in-depth phosphoproteome analysis.</title>
        <authorList>
            <person name="Albuquerque C.P."/>
            <person name="Smolka M.B."/>
            <person name="Payne S.H."/>
            <person name="Bafna V."/>
            <person name="Eng J."/>
            <person name="Zhou H."/>
        </authorList>
    </citation>
    <scope>IDENTIFICATION BY MASS SPECTROMETRY [LARGE SCALE ANALYSIS]</scope>
</reference>
<reference key="10">
    <citation type="journal article" date="2015" name="Proteomics">
        <title>Expanding the yeast protein arginine methylome.</title>
        <authorList>
            <person name="Plank M."/>
            <person name="Fischer R."/>
            <person name="Geoghegan V."/>
            <person name="Charles P.D."/>
            <person name="Konietzny R."/>
            <person name="Acuto O."/>
            <person name="Pears C."/>
            <person name="Schofield C.J."/>
            <person name="Kessler B.M."/>
        </authorList>
    </citation>
    <scope>METHYLATION AT ARG-39</scope>
</reference>
<reference key="11">
    <citation type="journal article" date="2021" name="J. Proteome Res.">
        <title>Discovery of arginine methylation, phosphorylation, and their co-occurrence in condensate-associated proteins in Saccharomyces cerevisiae.</title>
        <authorList>
            <person name="Hamey J.J."/>
            <person name="Nguyen A."/>
            <person name="Wilkins M.R."/>
        </authorList>
    </citation>
    <scope>METHYLATION AT ARG-30</scope>
</reference>
<evidence type="ECO:0000255" key="1"/>
<evidence type="ECO:0000256" key="2">
    <source>
        <dbReference type="SAM" id="MobiDB-lite"/>
    </source>
</evidence>
<evidence type="ECO:0000269" key="3">
    <source>
    </source>
</evidence>
<evidence type="ECO:0000269" key="4">
    <source>
    </source>
</evidence>
<evidence type="ECO:0000269" key="5">
    <source>
    </source>
</evidence>
<evidence type="ECO:0000269" key="6">
    <source>
    </source>
</evidence>
<evidence type="ECO:0000269" key="7">
    <source>
    </source>
</evidence>
<evidence type="ECO:0000269" key="8">
    <source>
    </source>
</evidence>
<evidence type="ECO:0000303" key="9">
    <source>
    </source>
</evidence>
<evidence type="ECO:0000305" key="10"/>
<comment type="function">
    <text evidence="3 6">Required to activate transcription of PDR3, a gene involved in retrograde regulation of multidrug resistance, a phenomenon that takes place in cells that have lost their mitochondrial genome. Also required for ubiquitination of histone H2B to form H2BK123ub1. H2BK123ub1 gives a specific tag for epigenetic transcriptional activation, telomeric silencing, and is also a prerequisite for H3K4me and H3K79me formation. Its precise role in H2BK123ub1 formation however is unclear and is independent of retrograde regulation of multidrug resistance function.</text>
</comment>
<comment type="subunit">
    <text evidence="3 6">Probably interacts with BRE1.</text>
</comment>
<comment type="subcellular location">
    <subcellularLocation>
        <location evidence="4">Nucleus</location>
    </subcellularLocation>
</comment>
<comment type="miscellaneous">
    <text evidence="5">Present with 2060 molecules/cell in log phase SD medium.</text>
</comment>
<organism>
    <name type="scientific">Saccharomyces cerevisiae (strain ATCC 204508 / S288c)</name>
    <name type="common">Baker's yeast</name>
    <dbReference type="NCBI Taxonomy" id="559292"/>
    <lineage>
        <taxon>Eukaryota</taxon>
        <taxon>Fungi</taxon>
        <taxon>Dikarya</taxon>
        <taxon>Ascomycota</taxon>
        <taxon>Saccharomycotina</taxon>
        <taxon>Saccharomycetes</taxon>
        <taxon>Saccharomycetales</taxon>
        <taxon>Saccharomycetaceae</taxon>
        <taxon>Saccharomyces</taxon>
    </lineage>
</organism>
<sequence>MSGYTGNNYSRYSSTPPRQRGGYHHARRSRGGAGGSYYRGGNASYGARYNSDYEQPPQEGDLRQTGAYYRNGYTDTRPYYSANSRHYQAQPSPRYNNGTNSYHLPQRGNSQDTNGRTTSASQEDNDEKRVKSRYRNMQADHPRQQPMSVGSTSSRNGSSGNSSTSSTSNGLPPPPSVSSITNNRSYHSSAYPYSSSHTYNNYHHRETPPPPPSNGYYAKGYPVHVPENRSNSDGSSSSVVKKKRILDMKDSPFIYLTDFDKNVKKTNNTESECEKAREVFKESDSIDSALEELNLKINSNELELRLLNNQCDKHALNIQLTQEKLDSLLLMQ</sequence>
<accession>Q02796</accession>
<accession>D6W3V9</accession>
<accession>Q6Q5I8</accession>
<keyword id="KW-0010">Activator</keyword>
<keyword id="KW-0156">Chromatin regulator</keyword>
<keyword id="KW-0175">Coiled coil</keyword>
<keyword id="KW-0488">Methylation</keyword>
<keyword id="KW-0539">Nucleus</keyword>
<keyword id="KW-1185">Reference proteome</keyword>
<keyword id="KW-0804">Transcription</keyword>
<keyword id="KW-0805">Transcription regulation</keyword>
<gene>
    <name evidence="9" type="primary">LGE1</name>
    <name type="ordered locus">YPL055C</name>
</gene>
<proteinExistence type="evidence at protein level"/>
<name>LGE1_YEAST</name>